<comment type="function">
    <text evidence="1">Nucleoside triphosphate pyrophosphatase that hydrolyzes dTTP and UTP. May have a dual role in cell division arrest and in preventing the incorporation of modified nucleotides into cellular nucleic acids.</text>
</comment>
<comment type="catalytic activity">
    <reaction evidence="1">
        <text>dTTP + H2O = dTMP + diphosphate + H(+)</text>
        <dbReference type="Rhea" id="RHEA:28534"/>
        <dbReference type="ChEBI" id="CHEBI:15377"/>
        <dbReference type="ChEBI" id="CHEBI:15378"/>
        <dbReference type="ChEBI" id="CHEBI:33019"/>
        <dbReference type="ChEBI" id="CHEBI:37568"/>
        <dbReference type="ChEBI" id="CHEBI:63528"/>
        <dbReference type="EC" id="3.6.1.9"/>
    </reaction>
</comment>
<comment type="catalytic activity">
    <reaction evidence="1">
        <text>UTP + H2O = UMP + diphosphate + H(+)</text>
        <dbReference type="Rhea" id="RHEA:29395"/>
        <dbReference type="ChEBI" id="CHEBI:15377"/>
        <dbReference type="ChEBI" id="CHEBI:15378"/>
        <dbReference type="ChEBI" id="CHEBI:33019"/>
        <dbReference type="ChEBI" id="CHEBI:46398"/>
        <dbReference type="ChEBI" id="CHEBI:57865"/>
        <dbReference type="EC" id="3.6.1.9"/>
    </reaction>
</comment>
<comment type="cofactor">
    <cofactor evidence="1">
        <name>a divalent metal cation</name>
        <dbReference type="ChEBI" id="CHEBI:60240"/>
    </cofactor>
</comment>
<comment type="subcellular location">
    <subcellularLocation>
        <location evidence="1">Cytoplasm</location>
    </subcellularLocation>
</comment>
<comment type="similarity">
    <text evidence="1">Belongs to the Maf family. YhdE subfamily.</text>
</comment>
<evidence type="ECO:0000255" key="1">
    <source>
        <dbReference type="HAMAP-Rule" id="MF_00528"/>
    </source>
</evidence>
<proteinExistence type="inferred from homology"/>
<dbReference type="EC" id="3.6.1.9" evidence="1"/>
<dbReference type="EMBL" id="CP000939">
    <property type="protein sequence ID" value="ACA46571.1"/>
    <property type="molecule type" value="Genomic_DNA"/>
</dbReference>
<dbReference type="RefSeq" id="WP_003403491.1">
    <property type="nucleotide sequence ID" value="NC_010516.1"/>
</dbReference>
<dbReference type="SMR" id="B1IM03"/>
<dbReference type="KEGG" id="cbb:CLD_1540"/>
<dbReference type="HOGENOM" id="CLU_040416_0_0_9"/>
<dbReference type="Proteomes" id="UP000008541">
    <property type="component" value="Chromosome"/>
</dbReference>
<dbReference type="GO" id="GO:0005737">
    <property type="term" value="C:cytoplasm"/>
    <property type="evidence" value="ECO:0007669"/>
    <property type="project" value="UniProtKB-SubCell"/>
</dbReference>
<dbReference type="GO" id="GO:0036218">
    <property type="term" value="F:dTTP diphosphatase activity"/>
    <property type="evidence" value="ECO:0007669"/>
    <property type="project" value="RHEA"/>
</dbReference>
<dbReference type="GO" id="GO:0036221">
    <property type="term" value="F:UTP diphosphatase activity"/>
    <property type="evidence" value="ECO:0007669"/>
    <property type="project" value="RHEA"/>
</dbReference>
<dbReference type="GO" id="GO:0009117">
    <property type="term" value="P:nucleotide metabolic process"/>
    <property type="evidence" value="ECO:0007669"/>
    <property type="project" value="UniProtKB-KW"/>
</dbReference>
<dbReference type="CDD" id="cd00555">
    <property type="entry name" value="Maf"/>
    <property type="match status" value="1"/>
</dbReference>
<dbReference type="FunFam" id="3.90.950.10:FF:000016">
    <property type="entry name" value="dTTP/UTP pyrophosphatase"/>
    <property type="match status" value="1"/>
</dbReference>
<dbReference type="Gene3D" id="3.90.950.10">
    <property type="match status" value="1"/>
</dbReference>
<dbReference type="HAMAP" id="MF_00528">
    <property type="entry name" value="Maf"/>
    <property type="match status" value="1"/>
</dbReference>
<dbReference type="InterPro" id="IPR029001">
    <property type="entry name" value="ITPase-like_fam"/>
</dbReference>
<dbReference type="InterPro" id="IPR003697">
    <property type="entry name" value="Maf-like"/>
</dbReference>
<dbReference type="NCBIfam" id="TIGR00172">
    <property type="entry name" value="maf"/>
    <property type="match status" value="1"/>
</dbReference>
<dbReference type="NCBIfam" id="NF000867">
    <property type="entry name" value="PRK00078.1"/>
    <property type="match status" value="1"/>
</dbReference>
<dbReference type="PANTHER" id="PTHR43213">
    <property type="entry name" value="BIFUNCTIONAL DTTP/UTP PYROPHOSPHATASE/METHYLTRANSFERASE PROTEIN-RELATED"/>
    <property type="match status" value="1"/>
</dbReference>
<dbReference type="PANTHER" id="PTHR43213:SF5">
    <property type="entry name" value="BIFUNCTIONAL DTTP_UTP PYROPHOSPHATASE_METHYLTRANSFERASE PROTEIN-RELATED"/>
    <property type="match status" value="1"/>
</dbReference>
<dbReference type="Pfam" id="PF02545">
    <property type="entry name" value="Maf"/>
    <property type="match status" value="1"/>
</dbReference>
<dbReference type="PIRSF" id="PIRSF006305">
    <property type="entry name" value="Maf"/>
    <property type="match status" value="1"/>
</dbReference>
<dbReference type="SUPFAM" id="SSF52972">
    <property type="entry name" value="ITPase-like"/>
    <property type="match status" value="1"/>
</dbReference>
<reference key="1">
    <citation type="journal article" date="2007" name="PLoS ONE">
        <title>Analysis of the neurotoxin complex genes in Clostridium botulinum A1-A4 and B1 strains: BoNT/A3, /Ba4 and /B1 clusters are located within plasmids.</title>
        <authorList>
            <person name="Smith T.J."/>
            <person name="Hill K.K."/>
            <person name="Foley B.T."/>
            <person name="Detter J.C."/>
            <person name="Munk A.C."/>
            <person name="Bruce D.C."/>
            <person name="Doggett N.A."/>
            <person name="Smith L.A."/>
            <person name="Marks J.D."/>
            <person name="Xie G."/>
            <person name="Brettin T.S."/>
        </authorList>
    </citation>
    <scope>NUCLEOTIDE SEQUENCE [LARGE SCALE GENOMIC DNA]</scope>
    <source>
        <strain>Okra / Type B1</strain>
    </source>
</reference>
<gene>
    <name type="ordered locus">CLD_1540</name>
</gene>
<protein>
    <recommendedName>
        <fullName evidence="1">dTTP/UTP pyrophosphatase</fullName>
        <shortName evidence="1">dTTPase/UTPase</shortName>
        <ecNumber evidence="1">3.6.1.9</ecNumber>
    </recommendedName>
    <alternativeName>
        <fullName evidence="1">Nucleoside triphosphate pyrophosphatase</fullName>
    </alternativeName>
    <alternativeName>
        <fullName evidence="1">Nucleotide pyrophosphatase</fullName>
        <shortName evidence="1">Nucleotide PPase</shortName>
    </alternativeName>
</protein>
<feature type="chain" id="PRO_1000127781" description="dTTP/UTP pyrophosphatase">
    <location>
        <begin position="1"/>
        <end position="194"/>
    </location>
</feature>
<feature type="active site" description="Proton acceptor" evidence="1">
    <location>
        <position position="73"/>
    </location>
</feature>
<feature type="site" description="Important for substrate specificity" evidence="1">
    <location>
        <position position="12"/>
    </location>
</feature>
<feature type="site" description="Important for substrate specificity" evidence="1">
    <location>
        <position position="74"/>
    </location>
</feature>
<feature type="site" description="Important for substrate specificity" evidence="1">
    <location>
        <position position="158"/>
    </location>
</feature>
<keyword id="KW-0963">Cytoplasm</keyword>
<keyword id="KW-0378">Hydrolase</keyword>
<keyword id="KW-0546">Nucleotide metabolism</keyword>
<sequence length="194" mass="21582">MKNIILASASERRQELLKRILEDFQIIVSDFDESSIPFKDNISSYVMNLAEGKARSVSKKIMDQDNNLVIGCDTLVAFNNKILGKPKDKKDAFEMLQALSGNEHEVYSGLAILDIKSNKIIKDFVCTKVKFSKLTSLQIEKYVNTGDPMDKAGAYGIQGKAGVFVENINGCYYNVVGLPLNKLNSMLMEMGVNL</sequence>
<organism>
    <name type="scientific">Clostridium botulinum (strain Okra / Type B1)</name>
    <dbReference type="NCBI Taxonomy" id="498213"/>
    <lineage>
        <taxon>Bacteria</taxon>
        <taxon>Bacillati</taxon>
        <taxon>Bacillota</taxon>
        <taxon>Clostridia</taxon>
        <taxon>Eubacteriales</taxon>
        <taxon>Clostridiaceae</taxon>
        <taxon>Clostridium</taxon>
    </lineage>
</organism>
<name>NTPPA_CLOBK</name>
<accession>B1IM03</accession>